<name>RS5_SYNR3</name>
<comment type="function">
    <text evidence="1">With S4 and S12 plays an important role in translational accuracy.</text>
</comment>
<comment type="function">
    <text evidence="1">Located at the back of the 30S subunit body where it stabilizes the conformation of the head with respect to the body.</text>
</comment>
<comment type="subunit">
    <text evidence="1">Part of the 30S ribosomal subunit. Contacts proteins S4 and S8.</text>
</comment>
<comment type="domain">
    <text>The N-terminal domain interacts with the head of the 30S subunit; the C-terminal domain interacts with the body and contacts protein S4. The interaction surface between S4 and S5 is involved in control of translational fidelity.</text>
</comment>
<comment type="similarity">
    <text evidence="1">Belongs to the universal ribosomal protein uS5 family.</text>
</comment>
<evidence type="ECO:0000255" key="1">
    <source>
        <dbReference type="HAMAP-Rule" id="MF_01307"/>
    </source>
</evidence>
<evidence type="ECO:0000256" key="2">
    <source>
        <dbReference type="SAM" id="MobiDB-lite"/>
    </source>
</evidence>
<evidence type="ECO:0000305" key="3"/>
<organism>
    <name type="scientific">Synechococcus sp. (strain RCC307)</name>
    <dbReference type="NCBI Taxonomy" id="316278"/>
    <lineage>
        <taxon>Bacteria</taxon>
        <taxon>Bacillati</taxon>
        <taxon>Cyanobacteriota</taxon>
        <taxon>Cyanophyceae</taxon>
        <taxon>Synechococcales</taxon>
        <taxon>Synechococcaceae</taxon>
        <taxon>Synechococcus</taxon>
    </lineage>
</organism>
<dbReference type="EMBL" id="CT978603">
    <property type="protein sequence ID" value="CAK29035.1"/>
    <property type="molecule type" value="Genomic_DNA"/>
</dbReference>
<dbReference type="SMR" id="A5GVX6"/>
<dbReference type="STRING" id="316278.SynRCC307_2132"/>
<dbReference type="KEGG" id="syr:SynRCC307_2132"/>
<dbReference type="eggNOG" id="COG0098">
    <property type="taxonomic scope" value="Bacteria"/>
</dbReference>
<dbReference type="HOGENOM" id="CLU_065898_2_1_3"/>
<dbReference type="OrthoDB" id="9809045at2"/>
<dbReference type="Proteomes" id="UP000001115">
    <property type="component" value="Chromosome"/>
</dbReference>
<dbReference type="GO" id="GO:0015935">
    <property type="term" value="C:small ribosomal subunit"/>
    <property type="evidence" value="ECO:0007669"/>
    <property type="project" value="InterPro"/>
</dbReference>
<dbReference type="GO" id="GO:0019843">
    <property type="term" value="F:rRNA binding"/>
    <property type="evidence" value="ECO:0007669"/>
    <property type="project" value="UniProtKB-UniRule"/>
</dbReference>
<dbReference type="GO" id="GO:0003735">
    <property type="term" value="F:structural constituent of ribosome"/>
    <property type="evidence" value="ECO:0007669"/>
    <property type="project" value="InterPro"/>
</dbReference>
<dbReference type="GO" id="GO:0006412">
    <property type="term" value="P:translation"/>
    <property type="evidence" value="ECO:0007669"/>
    <property type="project" value="UniProtKB-UniRule"/>
</dbReference>
<dbReference type="FunFam" id="3.30.230.10:FF:000002">
    <property type="entry name" value="30S ribosomal protein S5"/>
    <property type="match status" value="1"/>
</dbReference>
<dbReference type="Gene3D" id="3.30.160.20">
    <property type="match status" value="1"/>
</dbReference>
<dbReference type="Gene3D" id="3.30.230.10">
    <property type="match status" value="1"/>
</dbReference>
<dbReference type="HAMAP" id="MF_01307_B">
    <property type="entry name" value="Ribosomal_uS5_B"/>
    <property type="match status" value="1"/>
</dbReference>
<dbReference type="InterPro" id="IPR020568">
    <property type="entry name" value="Ribosomal_Su5_D2-typ_SF"/>
</dbReference>
<dbReference type="InterPro" id="IPR000851">
    <property type="entry name" value="Ribosomal_uS5"/>
</dbReference>
<dbReference type="InterPro" id="IPR005712">
    <property type="entry name" value="Ribosomal_uS5_bac-type"/>
</dbReference>
<dbReference type="InterPro" id="IPR005324">
    <property type="entry name" value="Ribosomal_uS5_C"/>
</dbReference>
<dbReference type="InterPro" id="IPR013810">
    <property type="entry name" value="Ribosomal_uS5_N"/>
</dbReference>
<dbReference type="InterPro" id="IPR018192">
    <property type="entry name" value="Ribosomal_uS5_N_CS"/>
</dbReference>
<dbReference type="InterPro" id="IPR014721">
    <property type="entry name" value="Ribsml_uS5_D2-typ_fold_subgr"/>
</dbReference>
<dbReference type="NCBIfam" id="TIGR01021">
    <property type="entry name" value="rpsE_bact"/>
    <property type="match status" value="1"/>
</dbReference>
<dbReference type="PANTHER" id="PTHR48277">
    <property type="entry name" value="MITOCHONDRIAL RIBOSOMAL PROTEIN S5"/>
    <property type="match status" value="1"/>
</dbReference>
<dbReference type="PANTHER" id="PTHR48277:SF1">
    <property type="entry name" value="MITOCHONDRIAL RIBOSOMAL PROTEIN S5"/>
    <property type="match status" value="1"/>
</dbReference>
<dbReference type="Pfam" id="PF00333">
    <property type="entry name" value="Ribosomal_S5"/>
    <property type="match status" value="1"/>
</dbReference>
<dbReference type="Pfam" id="PF03719">
    <property type="entry name" value="Ribosomal_S5_C"/>
    <property type="match status" value="1"/>
</dbReference>
<dbReference type="SUPFAM" id="SSF54768">
    <property type="entry name" value="dsRNA-binding domain-like"/>
    <property type="match status" value="1"/>
</dbReference>
<dbReference type="SUPFAM" id="SSF54211">
    <property type="entry name" value="Ribosomal protein S5 domain 2-like"/>
    <property type="match status" value="1"/>
</dbReference>
<dbReference type="PROSITE" id="PS00585">
    <property type="entry name" value="RIBOSOMAL_S5"/>
    <property type="match status" value="1"/>
</dbReference>
<dbReference type="PROSITE" id="PS50881">
    <property type="entry name" value="S5_DSRBD"/>
    <property type="match status" value="1"/>
</dbReference>
<keyword id="KW-1185">Reference proteome</keyword>
<keyword id="KW-0687">Ribonucleoprotein</keyword>
<keyword id="KW-0689">Ribosomal protein</keyword>
<keyword id="KW-0694">RNA-binding</keyword>
<keyword id="KW-0699">rRNA-binding</keyword>
<reference key="1">
    <citation type="submission" date="2006-05" db="EMBL/GenBank/DDBJ databases">
        <authorList>
            <consortium name="Genoscope"/>
        </authorList>
    </citation>
    <scope>NUCLEOTIDE SEQUENCE [LARGE SCALE GENOMIC DNA]</scope>
    <source>
        <strain>RCC307</strain>
    </source>
</reference>
<proteinExistence type="inferred from homology"/>
<gene>
    <name evidence="1" type="primary">rpsE</name>
    <name evidence="1" type="synonym">rps5</name>
    <name type="ordered locus">SynRCC307_2132</name>
</gene>
<sequence>MTQATNQTPGQDVPGAADVPAAAEGQGQGQGERRGGGGGRGGDRRGRGDRRGRGRDERDSEWQERVIQIRRVSKTVKGGKKMSFRAIVVVGNEKGQVGVGVGKAGDVIGAVKKGVADGKKHLVKVPLTRSNSIPTISTGRDGAASVLMRPAAPGTGVIAGGSIRTVLELAGIKNVLAKRLGSKTPLNNARAAMVALRDLRTHQDTAKERGITLEQIYS</sequence>
<feature type="chain" id="PRO_1000086069" description="Small ribosomal subunit protein uS5">
    <location>
        <begin position="1"/>
        <end position="218"/>
    </location>
</feature>
<feature type="domain" description="S5 DRBM" evidence="1">
    <location>
        <begin position="62"/>
        <end position="125"/>
    </location>
</feature>
<feature type="region of interest" description="Disordered" evidence="2">
    <location>
        <begin position="1"/>
        <end position="63"/>
    </location>
</feature>
<feature type="compositionally biased region" description="Polar residues" evidence="2">
    <location>
        <begin position="1"/>
        <end position="10"/>
    </location>
</feature>
<feature type="compositionally biased region" description="Low complexity" evidence="2">
    <location>
        <begin position="11"/>
        <end position="25"/>
    </location>
</feature>
<feature type="compositionally biased region" description="Basic and acidic residues" evidence="2">
    <location>
        <begin position="31"/>
        <end position="63"/>
    </location>
</feature>
<protein>
    <recommendedName>
        <fullName evidence="1">Small ribosomal subunit protein uS5</fullName>
    </recommendedName>
    <alternativeName>
        <fullName evidence="3">30S ribosomal protein S5</fullName>
    </alternativeName>
</protein>
<accession>A5GVX6</accession>